<evidence type="ECO:0000255" key="1">
    <source>
        <dbReference type="HAMAP-Rule" id="MF_00860"/>
    </source>
</evidence>
<reference key="1">
    <citation type="journal article" date="1986" name="Mol. Gen. Genet.">
        <title>Characterization of an rbcS gene from Nicotiana plumbaginifolia and expression of an rbcS-CAT chimeric gene in homologous and heterologous nuclear background.</title>
        <authorList>
            <person name="Poulsen C."/>
            <person name="Fluhr R."/>
            <person name="Kauffman J.M."/>
            <person name="Boutry M."/>
            <person name="Chua N.H."/>
        </authorList>
    </citation>
    <scope>NUCLEOTIDE SEQUENCE [GENOMIC DNA]</scope>
</reference>
<protein>
    <recommendedName>
        <fullName evidence="1">Ribulose bisphosphate carboxylase small subunit, chloroplastic</fullName>
        <shortName evidence="1">RuBisCO small subunit</shortName>
    </recommendedName>
    <alternativeName>
        <fullName>Ribulose bisphosphate carboxylase small chain 8B, chloroplastic</fullName>
        <shortName>RuBisCO small subunit 8B</shortName>
    </alternativeName>
</protein>
<name>RBS_NICPL</name>
<accession>P26573</accession>
<organism>
    <name type="scientific">Nicotiana plumbaginifolia</name>
    <name type="common">Leadwort-leaved tobacco</name>
    <name type="synonym">Tex-Mex tobacco</name>
    <dbReference type="NCBI Taxonomy" id="4092"/>
    <lineage>
        <taxon>Eukaryota</taxon>
        <taxon>Viridiplantae</taxon>
        <taxon>Streptophyta</taxon>
        <taxon>Embryophyta</taxon>
        <taxon>Tracheophyta</taxon>
        <taxon>Spermatophyta</taxon>
        <taxon>Magnoliopsida</taxon>
        <taxon>eudicotyledons</taxon>
        <taxon>Gunneridae</taxon>
        <taxon>Pentapetalae</taxon>
        <taxon>asterids</taxon>
        <taxon>lamiids</taxon>
        <taxon>Solanales</taxon>
        <taxon>Solanaceae</taxon>
        <taxon>Nicotianoideae</taxon>
        <taxon>Nicotianeae</taxon>
        <taxon>Nicotiana</taxon>
    </lineage>
</organism>
<proteinExistence type="inferred from homology"/>
<comment type="function">
    <text evidence="1">RuBisCO catalyzes two reactions: the carboxylation of D-ribulose 1,5-bisphosphate, the primary event in carbon dioxide fixation, as well as the oxidative fragmentation of the pentose substrate. Both reactions occur simultaneously and in competition at the same active site. Although the small subunit is not catalytic it is essential for maximal activity.</text>
</comment>
<comment type="subunit">
    <text evidence="1">Heterohexadecamer of 8 large and 8 small subunits.</text>
</comment>
<comment type="subcellular location">
    <subcellularLocation>
        <location evidence="1">Plastid</location>
        <location evidence="1">Chloroplast</location>
    </subcellularLocation>
</comment>
<comment type="miscellaneous">
    <text evidence="1">The basic functional RuBisCO is composed of a large chain homodimer in a 'head-to-tail' conformation. In form I RuBisCO this homodimer is arranged in a barrel-like tetramer with the small subunits forming a tetrameric 'cap' on each end of the 'barrel'.</text>
</comment>
<comment type="similarity">
    <text evidence="1">Belongs to the RuBisCO small chain family.</text>
</comment>
<keyword id="KW-0113">Calvin cycle</keyword>
<keyword id="KW-0120">Carbon dioxide fixation</keyword>
<keyword id="KW-0150">Chloroplast</keyword>
<keyword id="KW-0601">Photorespiration</keyword>
<keyword id="KW-0602">Photosynthesis</keyword>
<keyword id="KW-0934">Plastid</keyword>
<keyword id="KW-0809">Transit peptide</keyword>
<dbReference type="EMBL" id="M36685">
    <property type="protein sequence ID" value="AAA34110.1"/>
    <property type="molecule type" value="Genomic_DNA"/>
</dbReference>
<dbReference type="EMBL" id="X13711">
    <property type="protein sequence ID" value="CAA31994.1"/>
    <property type="molecule type" value="Genomic_DNA"/>
</dbReference>
<dbReference type="PIR" id="S08318">
    <property type="entry name" value="RKNTSV"/>
</dbReference>
<dbReference type="SMR" id="P26573"/>
<dbReference type="GO" id="GO:0009507">
    <property type="term" value="C:chloroplast"/>
    <property type="evidence" value="ECO:0007669"/>
    <property type="project" value="UniProtKB-SubCell"/>
</dbReference>
<dbReference type="GO" id="GO:0016984">
    <property type="term" value="F:ribulose-bisphosphate carboxylase activity"/>
    <property type="evidence" value="ECO:0007669"/>
    <property type="project" value="UniProtKB-UniRule"/>
</dbReference>
<dbReference type="GO" id="GO:0009853">
    <property type="term" value="P:photorespiration"/>
    <property type="evidence" value="ECO:0007669"/>
    <property type="project" value="UniProtKB-KW"/>
</dbReference>
<dbReference type="GO" id="GO:0019253">
    <property type="term" value="P:reductive pentose-phosphate cycle"/>
    <property type="evidence" value="ECO:0007669"/>
    <property type="project" value="UniProtKB-UniRule"/>
</dbReference>
<dbReference type="CDD" id="cd03527">
    <property type="entry name" value="RuBisCO_small"/>
    <property type="match status" value="1"/>
</dbReference>
<dbReference type="FunFam" id="3.30.190.10:FF:000001">
    <property type="entry name" value="Ribulose bisphosphate carboxylase small chain, chloroplastic"/>
    <property type="match status" value="1"/>
</dbReference>
<dbReference type="Gene3D" id="3.30.190.10">
    <property type="entry name" value="Ribulose bisphosphate carboxylase, small subunit"/>
    <property type="match status" value="1"/>
</dbReference>
<dbReference type="HAMAP" id="MF_00859">
    <property type="entry name" value="RuBisCO_S_bact"/>
    <property type="match status" value="1"/>
</dbReference>
<dbReference type="InterPro" id="IPR024681">
    <property type="entry name" value="RuBisCO_ssu"/>
</dbReference>
<dbReference type="InterPro" id="IPR000894">
    <property type="entry name" value="RuBisCO_ssu_dom"/>
</dbReference>
<dbReference type="InterPro" id="IPR024680">
    <property type="entry name" value="RuBisCO_ssu_N"/>
</dbReference>
<dbReference type="InterPro" id="IPR036385">
    <property type="entry name" value="RuBisCO_ssu_sf"/>
</dbReference>
<dbReference type="PANTHER" id="PTHR31262">
    <property type="entry name" value="RIBULOSE BISPHOSPHATE CARBOXYLASE SMALL CHAIN 1, CHLOROPLASTIC"/>
    <property type="match status" value="1"/>
</dbReference>
<dbReference type="PANTHER" id="PTHR31262:SF10">
    <property type="entry name" value="RIBULOSE BISPHOSPHATE CARBOXYLASE SMALL SUBUNIT 1A, CHLOROPLASTIC-RELATED"/>
    <property type="match status" value="1"/>
</dbReference>
<dbReference type="Pfam" id="PF12338">
    <property type="entry name" value="RbcS"/>
    <property type="match status" value="1"/>
</dbReference>
<dbReference type="Pfam" id="PF00101">
    <property type="entry name" value="RuBisCO_small"/>
    <property type="match status" value="1"/>
</dbReference>
<dbReference type="PRINTS" id="PR00152">
    <property type="entry name" value="RUBISCOSMALL"/>
</dbReference>
<dbReference type="SMART" id="SM00961">
    <property type="entry name" value="RuBisCO_small"/>
    <property type="match status" value="1"/>
</dbReference>
<dbReference type="SUPFAM" id="SSF55239">
    <property type="entry name" value="RuBisCO, small subunit"/>
    <property type="match status" value="1"/>
</dbReference>
<sequence>MASSVLSSAAVATRSNVAQANMVAPFTGLKSAASFPVSRKQNLDITSIASNGGRVQCMQVWPPINKKKYETLSYLPDLSQEQLLSEIEYLLKSGWVPCLEFETERGFVYREHHHSPGYYDGRYWTMWKLPMFGCTDATQVLAEVEEAKKAYPQAWVRIIGFDNVRQVQCISFIAYKPEGY</sequence>
<feature type="transit peptide" description="Chloroplast" evidence="1">
    <location>
        <begin position="1"/>
        <end position="56"/>
    </location>
</feature>
<feature type="chain" id="PRO_0000031534" description="Ribulose bisphosphate carboxylase small subunit, chloroplastic" evidence="1">
    <location>
        <begin position="57"/>
        <end position="180"/>
    </location>
</feature>
<gene>
    <name evidence="1" type="primary">RBCS</name>
    <name type="synonym">RBCS-8B</name>
</gene>